<organism>
    <name type="scientific">Pelagibacter ubique (strain HTCC1062)</name>
    <dbReference type="NCBI Taxonomy" id="335992"/>
    <lineage>
        <taxon>Bacteria</taxon>
        <taxon>Pseudomonadati</taxon>
        <taxon>Pseudomonadota</taxon>
        <taxon>Alphaproteobacteria</taxon>
        <taxon>Candidatus Pelagibacterales</taxon>
        <taxon>Candidatus Pelagibacteraceae</taxon>
        <taxon>Candidatus Pelagibacter</taxon>
    </lineage>
</organism>
<proteinExistence type="inferred from homology"/>
<gene>
    <name type="primary">rpmE</name>
    <name type="ordered locus">SAR11_0580</name>
</gene>
<name>RL31_PELUB</name>
<feature type="chain" id="PRO_0000259204" description="Large ribosomal subunit protein bL31">
    <location>
        <begin position="1"/>
        <end position="76"/>
    </location>
</feature>
<protein>
    <recommendedName>
        <fullName evidence="2">Large ribosomal subunit protein bL31</fullName>
    </recommendedName>
    <alternativeName>
        <fullName>50S ribosomal protein L31</fullName>
    </alternativeName>
</protein>
<reference key="1">
    <citation type="journal article" date="2005" name="Science">
        <title>Genome streamlining in a cosmopolitan oceanic bacterium.</title>
        <authorList>
            <person name="Giovannoni S.J."/>
            <person name="Tripp H.J."/>
            <person name="Givan S."/>
            <person name="Podar M."/>
            <person name="Vergin K.L."/>
            <person name="Baptista D."/>
            <person name="Bibbs L."/>
            <person name="Eads J."/>
            <person name="Richardson T.H."/>
            <person name="Noordewier M."/>
            <person name="Rappe M.S."/>
            <person name="Short J.M."/>
            <person name="Carrington J.C."/>
            <person name="Mathur E.J."/>
        </authorList>
    </citation>
    <scope>NUCLEOTIDE SEQUENCE [LARGE SCALE GENOMIC DNA]</scope>
    <source>
        <strain>HTCC1062</strain>
    </source>
</reference>
<dbReference type="EMBL" id="CP000084">
    <property type="protein sequence ID" value="AAZ21401.1"/>
    <property type="molecule type" value="Genomic_DNA"/>
</dbReference>
<dbReference type="RefSeq" id="WP_006997324.1">
    <property type="nucleotide sequence ID" value="NC_007205.1"/>
</dbReference>
<dbReference type="SMR" id="Q4FN38"/>
<dbReference type="STRING" id="335992.SAR11_0580"/>
<dbReference type="GeneID" id="66295085"/>
<dbReference type="KEGG" id="pub:SAR11_0580"/>
<dbReference type="eggNOG" id="COG0254">
    <property type="taxonomic scope" value="Bacteria"/>
</dbReference>
<dbReference type="HOGENOM" id="CLU_114306_3_2_5"/>
<dbReference type="OrthoDB" id="9803251at2"/>
<dbReference type="Proteomes" id="UP000002528">
    <property type="component" value="Chromosome"/>
</dbReference>
<dbReference type="GO" id="GO:1990904">
    <property type="term" value="C:ribonucleoprotein complex"/>
    <property type="evidence" value="ECO:0007669"/>
    <property type="project" value="UniProtKB-KW"/>
</dbReference>
<dbReference type="GO" id="GO:0005840">
    <property type="term" value="C:ribosome"/>
    <property type="evidence" value="ECO:0007669"/>
    <property type="project" value="UniProtKB-KW"/>
</dbReference>
<dbReference type="GO" id="GO:0019843">
    <property type="term" value="F:rRNA binding"/>
    <property type="evidence" value="ECO:0007669"/>
    <property type="project" value="UniProtKB-KW"/>
</dbReference>
<dbReference type="GO" id="GO:0003735">
    <property type="term" value="F:structural constituent of ribosome"/>
    <property type="evidence" value="ECO:0007669"/>
    <property type="project" value="InterPro"/>
</dbReference>
<dbReference type="GO" id="GO:0006412">
    <property type="term" value="P:translation"/>
    <property type="evidence" value="ECO:0007669"/>
    <property type="project" value="InterPro"/>
</dbReference>
<dbReference type="Gene3D" id="4.10.830.30">
    <property type="entry name" value="Ribosomal protein L31"/>
    <property type="match status" value="1"/>
</dbReference>
<dbReference type="InterPro" id="IPR034704">
    <property type="entry name" value="Ribosomal_bL28/bL31-like_sf"/>
</dbReference>
<dbReference type="InterPro" id="IPR002150">
    <property type="entry name" value="Ribosomal_bL31"/>
</dbReference>
<dbReference type="InterPro" id="IPR042105">
    <property type="entry name" value="Ribosomal_bL31_sf"/>
</dbReference>
<dbReference type="NCBIfam" id="TIGR00105">
    <property type="entry name" value="L31"/>
    <property type="match status" value="1"/>
</dbReference>
<dbReference type="NCBIfam" id="NF001809">
    <property type="entry name" value="PRK00528.1"/>
    <property type="match status" value="1"/>
</dbReference>
<dbReference type="PANTHER" id="PTHR33280">
    <property type="entry name" value="50S RIBOSOMAL PROTEIN L31, CHLOROPLASTIC"/>
    <property type="match status" value="1"/>
</dbReference>
<dbReference type="PANTHER" id="PTHR33280:SF6">
    <property type="entry name" value="LARGE RIBOSOMAL SUBUNIT PROTEIN BL31A"/>
    <property type="match status" value="1"/>
</dbReference>
<dbReference type="Pfam" id="PF01197">
    <property type="entry name" value="Ribosomal_L31"/>
    <property type="match status" value="1"/>
</dbReference>
<dbReference type="PRINTS" id="PR01249">
    <property type="entry name" value="RIBOSOMALL31"/>
</dbReference>
<dbReference type="SUPFAM" id="SSF143800">
    <property type="entry name" value="L28p-like"/>
    <property type="match status" value="1"/>
</dbReference>
<evidence type="ECO:0000250" key="1"/>
<evidence type="ECO:0000305" key="2"/>
<comment type="function">
    <text evidence="1">Binds the 23S rRNA.</text>
</comment>
<comment type="subunit">
    <text evidence="1">Part of the 50S ribosomal subunit.</text>
</comment>
<comment type="similarity">
    <text evidence="2">Belongs to the bacterial ribosomal protein bL31 family. Type A subfamily.</text>
</comment>
<accession>Q4FN38</accession>
<keyword id="KW-1185">Reference proteome</keyword>
<keyword id="KW-0687">Ribonucleoprotein</keyword>
<keyword id="KW-0689">Ribosomal protein</keyword>
<keyword id="KW-0694">RNA-binding</keyword>
<keyword id="KW-0699">rRNA-binding</keyword>
<sequence>MKKDIHPDYHTIKVEMTDGTQFETRSTWGKEGEVLKLEIDPKSHAAWTGGKQKLMDKGRVSKFNKKFQNFRSEKKD</sequence>